<dbReference type="EC" id="3.1.-.-" evidence="1"/>
<dbReference type="EMBL" id="CP000746">
    <property type="protein sequence ID" value="ABR73582.1"/>
    <property type="molecule type" value="Genomic_DNA"/>
</dbReference>
<dbReference type="RefSeq" id="WP_011978858.1">
    <property type="nucleotide sequence ID" value="NC_009655.1"/>
</dbReference>
<dbReference type="SMR" id="A6VKT5"/>
<dbReference type="STRING" id="339671.Asuc_0202"/>
<dbReference type="KEGG" id="asu:Asuc_0202"/>
<dbReference type="eggNOG" id="COG0816">
    <property type="taxonomic scope" value="Bacteria"/>
</dbReference>
<dbReference type="HOGENOM" id="CLU_098240_3_0_6"/>
<dbReference type="OrthoDB" id="9796140at2"/>
<dbReference type="Proteomes" id="UP000001114">
    <property type="component" value="Chromosome"/>
</dbReference>
<dbReference type="GO" id="GO:0005829">
    <property type="term" value="C:cytosol"/>
    <property type="evidence" value="ECO:0007669"/>
    <property type="project" value="TreeGrafter"/>
</dbReference>
<dbReference type="GO" id="GO:0004518">
    <property type="term" value="F:nuclease activity"/>
    <property type="evidence" value="ECO:0007669"/>
    <property type="project" value="UniProtKB-KW"/>
</dbReference>
<dbReference type="GO" id="GO:0000967">
    <property type="term" value="P:rRNA 5'-end processing"/>
    <property type="evidence" value="ECO:0007669"/>
    <property type="project" value="UniProtKB-UniRule"/>
</dbReference>
<dbReference type="CDD" id="cd16964">
    <property type="entry name" value="YqgF"/>
    <property type="match status" value="1"/>
</dbReference>
<dbReference type="FunFam" id="3.30.420.140:FF:000002">
    <property type="entry name" value="Putative pre-16S rRNA nuclease"/>
    <property type="match status" value="1"/>
</dbReference>
<dbReference type="Gene3D" id="3.30.420.140">
    <property type="entry name" value="YqgF/RNase H-like domain"/>
    <property type="match status" value="1"/>
</dbReference>
<dbReference type="HAMAP" id="MF_00651">
    <property type="entry name" value="Nuclease_YqgF"/>
    <property type="match status" value="1"/>
</dbReference>
<dbReference type="InterPro" id="IPR012337">
    <property type="entry name" value="RNaseH-like_sf"/>
</dbReference>
<dbReference type="InterPro" id="IPR005227">
    <property type="entry name" value="YqgF"/>
</dbReference>
<dbReference type="InterPro" id="IPR006641">
    <property type="entry name" value="YqgF/RNaseH-like_dom"/>
</dbReference>
<dbReference type="InterPro" id="IPR037027">
    <property type="entry name" value="YqgF/RNaseH-like_dom_sf"/>
</dbReference>
<dbReference type="NCBIfam" id="TIGR00250">
    <property type="entry name" value="RNAse_H_YqgF"/>
    <property type="match status" value="1"/>
</dbReference>
<dbReference type="PANTHER" id="PTHR33317">
    <property type="entry name" value="POLYNUCLEOTIDYL TRANSFERASE, RIBONUCLEASE H-LIKE SUPERFAMILY PROTEIN"/>
    <property type="match status" value="1"/>
</dbReference>
<dbReference type="PANTHER" id="PTHR33317:SF4">
    <property type="entry name" value="POLYNUCLEOTIDYL TRANSFERASE, RIBONUCLEASE H-LIKE SUPERFAMILY PROTEIN"/>
    <property type="match status" value="1"/>
</dbReference>
<dbReference type="Pfam" id="PF03652">
    <property type="entry name" value="RuvX"/>
    <property type="match status" value="1"/>
</dbReference>
<dbReference type="SMART" id="SM00732">
    <property type="entry name" value="YqgFc"/>
    <property type="match status" value="1"/>
</dbReference>
<dbReference type="SUPFAM" id="SSF53098">
    <property type="entry name" value="Ribonuclease H-like"/>
    <property type="match status" value="1"/>
</dbReference>
<name>YQGF_ACTSZ</name>
<keyword id="KW-0963">Cytoplasm</keyword>
<keyword id="KW-0378">Hydrolase</keyword>
<keyword id="KW-0540">Nuclease</keyword>
<keyword id="KW-1185">Reference proteome</keyword>
<keyword id="KW-0690">Ribosome biogenesis</keyword>
<gene>
    <name type="ordered locus">Asuc_0202</name>
</gene>
<feature type="chain" id="PRO_1000072687" description="Putative pre-16S rRNA nuclease">
    <location>
        <begin position="1"/>
        <end position="140"/>
    </location>
</feature>
<evidence type="ECO:0000255" key="1">
    <source>
        <dbReference type="HAMAP-Rule" id="MF_00651"/>
    </source>
</evidence>
<sequence length="140" mass="15563">MGMTVIAFDFGTKSIGCAVGQSITGTAQSLPAFKAQDGIPDWADIEKCLKEWKPDMVVVGLPLNMDGTEQDLTRRARKFGHRLNGRFGVKVAWQDERLTTTQARTEIFERGGYRALKKGKVDSISACLILESWFEEHPEG</sequence>
<proteinExistence type="inferred from homology"/>
<protein>
    <recommendedName>
        <fullName evidence="1">Putative pre-16S rRNA nuclease</fullName>
        <ecNumber evidence="1">3.1.-.-</ecNumber>
    </recommendedName>
</protein>
<accession>A6VKT5</accession>
<reference key="1">
    <citation type="journal article" date="2010" name="BMC Genomics">
        <title>A genomic perspective on the potential of Actinobacillus succinogenes for industrial succinate production.</title>
        <authorList>
            <person name="McKinlay J.B."/>
            <person name="Laivenieks M."/>
            <person name="Schindler B.D."/>
            <person name="McKinlay A.A."/>
            <person name="Siddaramappa S."/>
            <person name="Challacombe J.F."/>
            <person name="Lowry S.R."/>
            <person name="Clum A."/>
            <person name="Lapidus A.L."/>
            <person name="Burkhart K.B."/>
            <person name="Harkins V."/>
            <person name="Vieille C."/>
        </authorList>
    </citation>
    <scope>NUCLEOTIDE SEQUENCE [LARGE SCALE GENOMIC DNA]</scope>
    <source>
        <strain>ATCC 55618 / DSM 22257 / CCUG 43843 / 130Z</strain>
    </source>
</reference>
<comment type="function">
    <text evidence="1">Could be a nuclease involved in processing of the 5'-end of pre-16S rRNA.</text>
</comment>
<comment type="subcellular location">
    <subcellularLocation>
        <location evidence="1">Cytoplasm</location>
    </subcellularLocation>
</comment>
<comment type="similarity">
    <text evidence="1">Belongs to the YqgF nuclease family.</text>
</comment>
<organism>
    <name type="scientific">Actinobacillus succinogenes (strain ATCC 55618 / DSM 22257 / CCUG 43843 / 130Z)</name>
    <dbReference type="NCBI Taxonomy" id="339671"/>
    <lineage>
        <taxon>Bacteria</taxon>
        <taxon>Pseudomonadati</taxon>
        <taxon>Pseudomonadota</taxon>
        <taxon>Gammaproteobacteria</taxon>
        <taxon>Pasteurellales</taxon>
        <taxon>Pasteurellaceae</taxon>
        <taxon>Actinobacillus</taxon>
    </lineage>
</organism>